<sequence>MHSRFVKVKCPDCEHEQVIFDHPSTIVKCIICGRTVAEPTGGKGNIKAEIIEYVDQIE</sequence>
<feature type="chain" id="PRO_0000149069" description="Small ribosomal subunit protein eS27">
    <location>
        <begin position="1"/>
        <end position="58"/>
    </location>
</feature>
<feature type="zinc finger region" description="C4-type" evidence="1">
    <location>
        <begin position="10"/>
        <end position="32"/>
    </location>
</feature>
<feature type="binding site" evidence="1">
    <location>
        <position position="10"/>
    </location>
    <ligand>
        <name>Zn(2+)</name>
        <dbReference type="ChEBI" id="CHEBI:29105"/>
    </ligand>
</feature>
<feature type="binding site" evidence="1">
    <location>
        <position position="13"/>
    </location>
    <ligand>
        <name>Zn(2+)</name>
        <dbReference type="ChEBI" id="CHEBI:29105"/>
    </ligand>
</feature>
<feature type="binding site" evidence="1">
    <location>
        <position position="29"/>
    </location>
    <ligand>
        <name>Zn(2+)</name>
        <dbReference type="ChEBI" id="CHEBI:29105"/>
    </ligand>
</feature>
<feature type="binding site" evidence="1">
    <location>
        <position position="32"/>
    </location>
    <ligand>
        <name>Zn(2+)</name>
        <dbReference type="ChEBI" id="CHEBI:29105"/>
    </ligand>
</feature>
<feature type="strand" evidence="2">
    <location>
        <begin position="5"/>
        <end position="9"/>
    </location>
</feature>
<feature type="turn" evidence="2">
    <location>
        <begin position="11"/>
        <end position="13"/>
    </location>
</feature>
<feature type="strand" evidence="2">
    <location>
        <begin position="16"/>
        <end position="22"/>
    </location>
</feature>
<feature type="strand" evidence="2">
    <location>
        <begin position="30"/>
        <end position="32"/>
    </location>
</feature>
<feature type="strand" evidence="2">
    <location>
        <begin position="35"/>
        <end position="38"/>
    </location>
</feature>
<feature type="strand" evidence="2">
    <location>
        <begin position="41"/>
        <end position="43"/>
    </location>
</feature>
<feature type="strand" evidence="2">
    <location>
        <begin position="48"/>
        <end position="52"/>
    </location>
</feature>
<dbReference type="EMBL" id="AE000782">
    <property type="protein sequence ID" value="AAB89911.1"/>
    <property type="molecule type" value="Genomic_DNA"/>
</dbReference>
<dbReference type="PIR" id="E69416">
    <property type="entry name" value="E69416"/>
</dbReference>
<dbReference type="PDB" id="1QXF">
    <property type="method" value="NMR"/>
    <property type="chains" value="A=1-58"/>
</dbReference>
<dbReference type="PDBsum" id="1QXF"/>
<dbReference type="BMRB" id="O28935"/>
<dbReference type="SMR" id="O28935"/>
<dbReference type="STRING" id="224325.AF_1334"/>
<dbReference type="PaxDb" id="224325-AF_1334"/>
<dbReference type="EnsemblBacteria" id="AAB89911">
    <property type="protein sequence ID" value="AAB89911"/>
    <property type="gene ID" value="AF_1334"/>
</dbReference>
<dbReference type="KEGG" id="afu:AF_1334"/>
<dbReference type="eggNOG" id="arCOG04108">
    <property type="taxonomic scope" value="Archaea"/>
</dbReference>
<dbReference type="HOGENOM" id="CLU_199465_0_0_2"/>
<dbReference type="OrthoDB" id="5718at2157"/>
<dbReference type="PhylomeDB" id="O28935"/>
<dbReference type="EvolutionaryTrace" id="O28935"/>
<dbReference type="Proteomes" id="UP000002199">
    <property type="component" value="Chromosome"/>
</dbReference>
<dbReference type="GO" id="GO:1990904">
    <property type="term" value="C:ribonucleoprotein complex"/>
    <property type="evidence" value="ECO:0007669"/>
    <property type="project" value="UniProtKB-KW"/>
</dbReference>
<dbReference type="GO" id="GO:0005840">
    <property type="term" value="C:ribosome"/>
    <property type="evidence" value="ECO:0007669"/>
    <property type="project" value="UniProtKB-KW"/>
</dbReference>
<dbReference type="GO" id="GO:0003735">
    <property type="term" value="F:structural constituent of ribosome"/>
    <property type="evidence" value="ECO:0007669"/>
    <property type="project" value="InterPro"/>
</dbReference>
<dbReference type="GO" id="GO:0008270">
    <property type="term" value="F:zinc ion binding"/>
    <property type="evidence" value="ECO:0007669"/>
    <property type="project" value="UniProtKB-UniRule"/>
</dbReference>
<dbReference type="GO" id="GO:0006412">
    <property type="term" value="P:translation"/>
    <property type="evidence" value="ECO:0007669"/>
    <property type="project" value="UniProtKB-UniRule"/>
</dbReference>
<dbReference type="Gene3D" id="2.20.25.100">
    <property type="entry name" value="Zn-binding ribosomal proteins"/>
    <property type="match status" value="1"/>
</dbReference>
<dbReference type="HAMAP" id="MF_00371">
    <property type="entry name" value="Ribosomal_eS27"/>
    <property type="match status" value="1"/>
</dbReference>
<dbReference type="InterPro" id="IPR000592">
    <property type="entry name" value="Ribosomal_eS27"/>
</dbReference>
<dbReference type="InterPro" id="IPR023407">
    <property type="entry name" value="Ribosomal_eS27_Zn-bd_dom_sf"/>
</dbReference>
<dbReference type="InterPro" id="IPR011332">
    <property type="entry name" value="Ribosomal_zn-bd"/>
</dbReference>
<dbReference type="NCBIfam" id="NF001629">
    <property type="entry name" value="PRK00415.1"/>
    <property type="match status" value="1"/>
</dbReference>
<dbReference type="Pfam" id="PF01667">
    <property type="entry name" value="Ribosomal_S27e"/>
    <property type="match status" value="1"/>
</dbReference>
<dbReference type="SUPFAM" id="SSF57829">
    <property type="entry name" value="Zn-binding ribosomal proteins"/>
    <property type="match status" value="1"/>
</dbReference>
<dbReference type="PROSITE" id="PS01168">
    <property type="entry name" value="RIBOSOMAL_S27E"/>
    <property type="match status" value="1"/>
</dbReference>
<name>RS27_ARCFU</name>
<reference key="1">
    <citation type="journal article" date="1997" name="Nature">
        <title>The complete genome sequence of the hyperthermophilic, sulphate-reducing archaeon Archaeoglobus fulgidus.</title>
        <authorList>
            <person name="Klenk H.-P."/>
            <person name="Clayton R.A."/>
            <person name="Tomb J.-F."/>
            <person name="White O."/>
            <person name="Nelson K.E."/>
            <person name="Ketchum K.A."/>
            <person name="Dodson R.J."/>
            <person name="Gwinn M.L."/>
            <person name="Hickey E.K."/>
            <person name="Peterson J.D."/>
            <person name="Richardson D.L."/>
            <person name="Kerlavage A.R."/>
            <person name="Graham D.E."/>
            <person name="Kyrpides N.C."/>
            <person name="Fleischmann R.D."/>
            <person name="Quackenbush J."/>
            <person name="Lee N.H."/>
            <person name="Sutton G.G."/>
            <person name="Gill S.R."/>
            <person name="Kirkness E.F."/>
            <person name="Dougherty B.A."/>
            <person name="McKenney K."/>
            <person name="Adams M.D."/>
            <person name="Loftus B.J."/>
            <person name="Peterson S.N."/>
            <person name="Reich C.I."/>
            <person name="McNeil L.K."/>
            <person name="Badger J.H."/>
            <person name="Glodek A."/>
            <person name="Zhou L."/>
            <person name="Overbeek R."/>
            <person name="Gocayne J.D."/>
            <person name="Weidman J.F."/>
            <person name="McDonald L.A."/>
            <person name="Utterback T.R."/>
            <person name="Cotton M.D."/>
            <person name="Spriggs T."/>
            <person name="Artiach P."/>
            <person name="Kaine B.P."/>
            <person name="Sykes S.M."/>
            <person name="Sadow P.W."/>
            <person name="D'Andrea K.P."/>
            <person name="Bowman C."/>
            <person name="Fujii C."/>
            <person name="Garland S.A."/>
            <person name="Mason T.M."/>
            <person name="Olsen G.J."/>
            <person name="Fraser C.M."/>
            <person name="Smith H.O."/>
            <person name="Woese C.R."/>
            <person name="Venter J.C."/>
        </authorList>
    </citation>
    <scope>NUCLEOTIDE SEQUENCE [LARGE SCALE GENOMIC DNA]</scope>
    <source>
        <strain>ATCC 49558 / DSM 4304 / JCM 9628 / NBRC 100126 / VC-16</strain>
    </source>
</reference>
<reference key="2">
    <citation type="journal article" date="2004" name="Protein Sci.">
        <title>The NMR solution structure of the 30S ribosomal protein S27e encoded in gene RS27_ARCFU of Archaeoglobus fulgidis reveals a novel protein fold.</title>
        <authorList>
            <person name="Herve du Penhoat C."/>
            <person name="Atreya H.S."/>
            <person name="Shen Y."/>
            <person name="Liu G."/>
            <person name="Acton T.B."/>
            <person name="Xiao R."/>
            <person name="Li Z."/>
            <person name="Murray D."/>
            <person name="Montelione G.T."/>
            <person name="Szyperski T."/>
        </authorList>
    </citation>
    <scope>STRUCTURE BY NMR</scope>
</reference>
<organism>
    <name type="scientific">Archaeoglobus fulgidus (strain ATCC 49558 / DSM 4304 / JCM 9628 / NBRC 100126 / VC-16)</name>
    <dbReference type="NCBI Taxonomy" id="224325"/>
    <lineage>
        <taxon>Archaea</taxon>
        <taxon>Methanobacteriati</taxon>
        <taxon>Methanobacteriota</taxon>
        <taxon>Archaeoglobi</taxon>
        <taxon>Archaeoglobales</taxon>
        <taxon>Archaeoglobaceae</taxon>
        <taxon>Archaeoglobus</taxon>
    </lineage>
</organism>
<evidence type="ECO:0000255" key="1">
    <source>
        <dbReference type="HAMAP-Rule" id="MF_00371"/>
    </source>
</evidence>
<evidence type="ECO:0007829" key="2">
    <source>
        <dbReference type="PDB" id="1QXF"/>
    </source>
</evidence>
<keyword id="KW-0002">3D-structure</keyword>
<keyword id="KW-0479">Metal-binding</keyword>
<keyword id="KW-1185">Reference proteome</keyword>
<keyword id="KW-0687">Ribonucleoprotein</keyword>
<keyword id="KW-0689">Ribosomal protein</keyword>
<keyword id="KW-0862">Zinc</keyword>
<keyword id="KW-0863">Zinc-finger</keyword>
<gene>
    <name evidence="1" type="primary">rps27e</name>
    <name type="ordered locus">AF_1334</name>
</gene>
<proteinExistence type="evidence at protein level"/>
<accession>O28935</accession>
<protein>
    <recommendedName>
        <fullName evidence="1">Small ribosomal subunit protein eS27</fullName>
    </recommendedName>
</protein>
<comment type="cofactor">
    <cofactor evidence="1">
        <name>Zn(2+)</name>
        <dbReference type="ChEBI" id="CHEBI:29105"/>
    </cofactor>
    <text evidence="1">Binds 1 zinc ion per subunit.</text>
</comment>
<comment type="subunit">
    <text evidence="1">Part of the 30S ribosomal subunit.</text>
</comment>
<comment type="similarity">
    <text evidence="1">Belongs to the eukaryotic ribosomal protein eS27 family.</text>
</comment>